<organism>
    <name type="scientific">Bacillus subtilis (strain 168)</name>
    <dbReference type="NCBI Taxonomy" id="224308"/>
    <lineage>
        <taxon>Bacteria</taxon>
        <taxon>Bacillati</taxon>
        <taxon>Bacillota</taxon>
        <taxon>Bacilli</taxon>
        <taxon>Bacillales</taxon>
        <taxon>Bacillaceae</taxon>
        <taxon>Bacillus</taxon>
    </lineage>
</organism>
<name>LMRB_BACSU</name>
<evidence type="ECO:0000255" key="1"/>
<evidence type="ECO:0000305" key="2"/>
<dbReference type="EMBL" id="AB000617">
    <property type="protein sequence ID" value="BAA22228.1"/>
    <property type="molecule type" value="Genomic_DNA"/>
</dbReference>
<dbReference type="EMBL" id="AL009126">
    <property type="protein sequence ID" value="CAB12061.1"/>
    <property type="molecule type" value="Genomic_DNA"/>
</dbReference>
<dbReference type="PIR" id="E69652">
    <property type="entry name" value="E69652"/>
</dbReference>
<dbReference type="RefSeq" id="NP_388149.1">
    <property type="nucleotide sequence ID" value="NC_000964.3"/>
</dbReference>
<dbReference type="SMR" id="O35018"/>
<dbReference type="FunCoup" id="O35018">
    <property type="interactions" value="60"/>
</dbReference>
<dbReference type="STRING" id="224308.BSU02670"/>
<dbReference type="TCDB" id="2.A.1.3.30">
    <property type="family name" value="the major facilitator superfamily (mfs)"/>
</dbReference>
<dbReference type="PaxDb" id="224308-BSU02670"/>
<dbReference type="EnsemblBacteria" id="CAB12061">
    <property type="protein sequence ID" value="CAB12061"/>
    <property type="gene ID" value="BSU_02670"/>
</dbReference>
<dbReference type="GeneID" id="938388"/>
<dbReference type="KEGG" id="bsu:BSU02670"/>
<dbReference type="PATRIC" id="fig|224308.179.peg.277"/>
<dbReference type="eggNOG" id="COG0477">
    <property type="taxonomic scope" value="Bacteria"/>
</dbReference>
<dbReference type="InParanoid" id="O35018"/>
<dbReference type="OrthoDB" id="9816041at2"/>
<dbReference type="PhylomeDB" id="O35018"/>
<dbReference type="BioCyc" id="BSUB:BSU02670-MONOMER"/>
<dbReference type="Proteomes" id="UP000001570">
    <property type="component" value="Chromosome"/>
</dbReference>
<dbReference type="GO" id="GO:0016020">
    <property type="term" value="C:membrane"/>
    <property type="evidence" value="ECO:0000318"/>
    <property type="project" value="GO_Central"/>
</dbReference>
<dbReference type="GO" id="GO:0005886">
    <property type="term" value="C:plasma membrane"/>
    <property type="evidence" value="ECO:0007669"/>
    <property type="project" value="UniProtKB-SubCell"/>
</dbReference>
<dbReference type="GO" id="GO:0022857">
    <property type="term" value="F:transmembrane transporter activity"/>
    <property type="evidence" value="ECO:0007669"/>
    <property type="project" value="InterPro"/>
</dbReference>
<dbReference type="GO" id="GO:0046677">
    <property type="term" value="P:response to antibiotic"/>
    <property type="evidence" value="ECO:0007669"/>
    <property type="project" value="UniProtKB-KW"/>
</dbReference>
<dbReference type="CDD" id="cd17503">
    <property type="entry name" value="MFS_LmrB_MDR_like"/>
    <property type="match status" value="1"/>
</dbReference>
<dbReference type="Gene3D" id="1.20.1250.20">
    <property type="entry name" value="MFS general substrate transporter like domains"/>
    <property type="match status" value="1"/>
</dbReference>
<dbReference type="Gene3D" id="1.20.1720.10">
    <property type="entry name" value="Multidrug resistance protein D"/>
    <property type="match status" value="1"/>
</dbReference>
<dbReference type="InterPro" id="IPR004638">
    <property type="entry name" value="EmrB-like"/>
</dbReference>
<dbReference type="InterPro" id="IPR011701">
    <property type="entry name" value="MFS"/>
</dbReference>
<dbReference type="InterPro" id="IPR020846">
    <property type="entry name" value="MFS_dom"/>
</dbReference>
<dbReference type="InterPro" id="IPR036259">
    <property type="entry name" value="MFS_trans_sf"/>
</dbReference>
<dbReference type="NCBIfam" id="TIGR00711">
    <property type="entry name" value="efflux_EmrB"/>
    <property type="match status" value="1"/>
</dbReference>
<dbReference type="NCBIfam" id="NF000060">
    <property type="entry name" value="MFS_efflux_LmrB"/>
    <property type="match status" value="1"/>
</dbReference>
<dbReference type="PANTHER" id="PTHR42718:SF43">
    <property type="entry name" value="LINCOMYCIN RESISTANCE PROTEIN LMRB"/>
    <property type="match status" value="1"/>
</dbReference>
<dbReference type="PANTHER" id="PTHR42718">
    <property type="entry name" value="MAJOR FACILITATOR SUPERFAMILY MULTIDRUG TRANSPORTER MFSC"/>
    <property type="match status" value="1"/>
</dbReference>
<dbReference type="Pfam" id="PF07690">
    <property type="entry name" value="MFS_1"/>
    <property type="match status" value="1"/>
</dbReference>
<dbReference type="PRINTS" id="PR01036">
    <property type="entry name" value="TCRTETB"/>
</dbReference>
<dbReference type="SUPFAM" id="SSF103473">
    <property type="entry name" value="MFS general substrate transporter"/>
    <property type="match status" value="1"/>
</dbReference>
<dbReference type="PROSITE" id="PS50850">
    <property type="entry name" value="MFS"/>
    <property type="match status" value="1"/>
</dbReference>
<proteinExistence type="inferred from homology"/>
<keyword id="KW-0046">Antibiotic resistance</keyword>
<keyword id="KW-1003">Cell membrane</keyword>
<keyword id="KW-0472">Membrane</keyword>
<keyword id="KW-1185">Reference proteome</keyword>
<keyword id="KW-0812">Transmembrane</keyword>
<keyword id="KW-1133">Transmembrane helix</keyword>
<keyword id="KW-0813">Transport</keyword>
<comment type="function">
    <text>Proton-dependent transporter. May mediate the efflux of lincomycin.</text>
</comment>
<comment type="subcellular location">
    <subcellularLocation>
        <location evidence="2">Cell membrane</location>
        <topology evidence="2">Multi-pass membrane protein</topology>
    </subcellularLocation>
</comment>
<comment type="similarity">
    <text evidence="2">Belongs to the major facilitator superfamily. EmrB family.</text>
</comment>
<protein>
    <recommendedName>
        <fullName>Lincomycin resistance protein LmrB</fullName>
    </recommendedName>
</protein>
<gene>
    <name type="primary">lmrB</name>
    <name type="synonym">yccA</name>
    <name type="ordered locus">BSU02670</name>
</gene>
<reference key="1">
    <citation type="journal article" date="1997" name="Microbiology">
        <title>A 32 kb nucleotide sequence from the region of the lincomycin-resistance gene (22 degrees-25 degrees) of the Bacillus subtilis chromosome and identification of the site of the lin-2 mutation.</title>
        <authorList>
            <person name="Kumano M."/>
            <person name="Tamakoshi A."/>
            <person name="Yamane K."/>
        </authorList>
    </citation>
    <scope>NUCLEOTIDE SEQUENCE [GENOMIC DNA]</scope>
    <source>
        <strain>168</strain>
    </source>
</reference>
<reference key="2">
    <citation type="journal article" date="1997" name="Nature">
        <title>The complete genome sequence of the Gram-positive bacterium Bacillus subtilis.</title>
        <authorList>
            <person name="Kunst F."/>
            <person name="Ogasawara N."/>
            <person name="Moszer I."/>
            <person name="Albertini A.M."/>
            <person name="Alloni G."/>
            <person name="Azevedo V."/>
            <person name="Bertero M.G."/>
            <person name="Bessieres P."/>
            <person name="Bolotin A."/>
            <person name="Borchert S."/>
            <person name="Borriss R."/>
            <person name="Boursier L."/>
            <person name="Brans A."/>
            <person name="Braun M."/>
            <person name="Brignell S.C."/>
            <person name="Bron S."/>
            <person name="Brouillet S."/>
            <person name="Bruschi C.V."/>
            <person name="Caldwell B."/>
            <person name="Capuano V."/>
            <person name="Carter N.M."/>
            <person name="Choi S.-K."/>
            <person name="Codani J.-J."/>
            <person name="Connerton I.F."/>
            <person name="Cummings N.J."/>
            <person name="Daniel R.A."/>
            <person name="Denizot F."/>
            <person name="Devine K.M."/>
            <person name="Duesterhoeft A."/>
            <person name="Ehrlich S.D."/>
            <person name="Emmerson P.T."/>
            <person name="Entian K.-D."/>
            <person name="Errington J."/>
            <person name="Fabret C."/>
            <person name="Ferrari E."/>
            <person name="Foulger D."/>
            <person name="Fritz C."/>
            <person name="Fujita M."/>
            <person name="Fujita Y."/>
            <person name="Fuma S."/>
            <person name="Galizzi A."/>
            <person name="Galleron N."/>
            <person name="Ghim S.-Y."/>
            <person name="Glaser P."/>
            <person name="Goffeau A."/>
            <person name="Golightly E.J."/>
            <person name="Grandi G."/>
            <person name="Guiseppi G."/>
            <person name="Guy B.J."/>
            <person name="Haga K."/>
            <person name="Haiech J."/>
            <person name="Harwood C.R."/>
            <person name="Henaut A."/>
            <person name="Hilbert H."/>
            <person name="Holsappel S."/>
            <person name="Hosono S."/>
            <person name="Hullo M.-F."/>
            <person name="Itaya M."/>
            <person name="Jones L.-M."/>
            <person name="Joris B."/>
            <person name="Karamata D."/>
            <person name="Kasahara Y."/>
            <person name="Klaerr-Blanchard M."/>
            <person name="Klein C."/>
            <person name="Kobayashi Y."/>
            <person name="Koetter P."/>
            <person name="Koningstein G."/>
            <person name="Krogh S."/>
            <person name="Kumano M."/>
            <person name="Kurita K."/>
            <person name="Lapidus A."/>
            <person name="Lardinois S."/>
            <person name="Lauber J."/>
            <person name="Lazarevic V."/>
            <person name="Lee S.-M."/>
            <person name="Levine A."/>
            <person name="Liu H."/>
            <person name="Masuda S."/>
            <person name="Mauel C."/>
            <person name="Medigue C."/>
            <person name="Medina N."/>
            <person name="Mellado R.P."/>
            <person name="Mizuno M."/>
            <person name="Moestl D."/>
            <person name="Nakai S."/>
            <person name="Noback M."/>
            <person name="Noone D."/>
            <person name="O'Reilly M."/>
            <person name="Ogawa K."/>
            <person name="Ogiwara A."/>
            <person name="Oudega B."/>
            <person name="Park S.-H."/>
            <person name="Parro V."/>
            <person name="Pohl T.M."/>
            <person name="Portetelle D."/>
            <person name="Porwollik S."/>
            <person name="Prescott A.M."/>
            <person name="Presecan E."/>
            <person name="Pujic P."/>
            <person name="Purnelle B."/>
            <person name="Rapoport G."/>
            <person name="Rey M."/>
            <person name="Reynolds S."/>
            <person name="Rieger M."/>
            <person name="Rivolta C."/>
            <person name="Rocha E."/>
            <person name="Roche B."/>
            <person name="Rose M."/>
            <person name="Sadaie Y."/>
            <person name="Sato T."/>
            <person name="Scanlan E."/>
            <person name="Schleich S."/>
            <person name="Schroeter R."/>
            <person name="Scoffone F."/>
            <person name="Sekiguchi J."/>
            <person name="Sekowska A."/>
            <person name="Seror S.J."/>
            <person name="Serror P."/>
            <person name="Shin B.-S."/>
            <person name="Soldo B."/>
            <person name="Sorokin A."/>
            <person name="Tacconi E."/>
            <person name="Takagi T."/>
            <person name="Takahashi H."/>
            <person name="Takemaru K."/>
            <person name="Takeuchi M."/>
            <person name="Tamakoshi A."/>
            <person name="Tanaka T."/>
            <person name="Terpstra P."/>
            <person name="Tognoni A."/>
            <person name="Tosato V."/>
            <person name="Uchiyama S."/>
            <person name="Vandenbol M."/>
            <person name="Vannier F."/>
            <person name="Vassarotti A."/>
            <person name="Viari A."/>
            <person name="Wambutt R."/>
            <person name="Wedler E."/>
            <person name="Wedler H."/>
            <person name="Weitzenegger T."/>
            <person name="Winters P."/>
            <person name="Wipat A."/>
            <person name="Yamamoto H."/>
            <person name="Yamane K."/>
            <person name="Yasumoto K."/>
            <person name="Yata K."/>
            <person name="Yoshida K."/>
            <person name="Yoshikawa H.-F."/>
            <person name="Zumstein E."/>
            <person name="Yoshikawa H."/>
            <person name="Danchin A."/>
        </authorList>
    </citation>
    <scope>NUCLEOTIDE SEQUENCE [LARGE SCALE GENOMIC DNA]</scope>
    <source>
        <strain>168</strain>
    </source>
</reference>
<accession>O35018</accession>
<sequence length="479" mass="51709">MILETTAKASQQYKVMPIMISLLLAGFIGMFSETALNIALTDLMKELNITAATVQWLTTGYLLVLGILVPVSGLLLQWFTTRQLFTVSLIFSILGTFIAALAPSFSFLLAARIVQALGTGLLLPLMFNTILVIFPPHKRGAAMGTIGLVIMFAPAIGPTFSGLVLEHLNWHWIFWISLPFLVLALVFGIAYMQNVSETTKPKIDVLSIILSTIGFGGIVFGFSNAGEGSGGWSSPTVIVSLIVGVVGLILFSIRQLTMKQPMMNLRAFKYPMFILGVIMVFICMMVILSSMLLLPMYLQGGLVLTAFASGLVLLPGGILNGFMSPVTGRLFDKYGPKWLVIPGFVIVTVVLWFFSNVTTTSTAVLIIILHTCLMIGISMIMMPAQTNGLNQLPREFYPDGTAIMNTLQQMAGAIGTAVAVSIMAAGQHDYMSTVKNPADPAVIPQALTAGVQHAFVFAMIVAIIGLIGAFFMKRVKVDH</sequence>
<feature type="chain" id="PRO_0000173328" description="Lincomycin resistance protein LmrB">
    <location>
        <begin position="1"/>
        <end position="479"/>
    </location>
</feature>
<feature type="transmembrane region" description="Helical" evidence="1">
    <location>
        <begin position="19"/>
        <end position="41"/>
    </location>
</feature>
<feature type="transmembrane region" description="Helical" evidence="1">
    <location>
        <begin position="56"/>
        <end position="78"/>
    </location>
</feature>
<feature type="transmembrane region" description="Helical" evidence="1">
    <location>
        <begin position="85"/>
        <end position="107"/>
    </location>
</feature>
<feature type="transmembrane region" description="Helical" evidence="1">
    <location>
        <begin position="112"/>
        <end position="134"/>
    </location>
</feature>
<feature type="transmembrane region" description="Helical" evidence="1">
    <location>
        <begin position="141"/>
        <end position="160"/>
    </location>
</feature>
<feature type="transmembrane region" description="Helical" evidence="1">
    <location>
        <begin position="170"/>
        <end position="192"/>
    </location>
</feature>
<feature type="transmembrane region" description="Helical" evidence="1">
    <location>
        <begin position="205"/>
        <end position="222"/>
    </location>
</feature>
<feature type="transmembrane region" description="Helical" evidence="1">
    <location>
        <begin position="232"/>
        <end position="251"/>
    </location>
</feature>
<feature type="transmembrane region" description="Helical" evidence="1">
    <location>
        <begin position="272"/>
        <end position="294"/>
    </location>
</feature>
<feature type="transmembrane region" description="Helical" evidence="1">
    <location>
        <begin position="304"/>
        <end position="326"/>
    </location>
</feature>
<feature type="transmembrane region" description="Helical" evidence="1">
    <location>
        <begin position="338"/>
        <end position="355"/>
    </location>
</feature>
<feature type="transmembrane region" description="Helical" evidence="1">
    <location>
        <begin position="360"/>
        <end position="382"/>
    </location>
</feature>
<feature type="transmembrane region" description="Helical" evidence="1">
    <location>
        <begin position="403"/>
        <end position="425"/>
    </location>
</feature>
<feature type="transmembrane region" description="Helical" evidence="1">
    <location>
        <begin position="449"/>
        <end position="471"/>
    </location>
</feature>